<feature type="chain" id="PRO_0000150677" description="Olfactory receptor 9A4">
    <location>
        <begin position="1"/>
        <end position="314"/>
    </location>
</feature>
<feature type="topological domain" description="Extracellular" evidence="1">
    <location>
        <begin position="1"/>
        <end position="24"/>
    </location>
</feature>
<feature type="transmembrane region" description="Helical; Name=1" evidence="1">
    <location>
        <begin position="25"/>
        <end position="45"/>
    </location>
</feature>
<feature type="topological domain" description="Cytoplasmic" evidence="1">
    <location>
        <begin position="46"/>
        <end position="53"/>
    </location>
</feature>
<feature type="transmembrane region" description="Helical; Name=2" evidence="1">
    <location>
        <begin position="54"/>
        <end position="74"/>
    </location>
</feature>
<feature type="topological domain" description="Extracellular" evidence="1">
    <location>
        <begin position="75"/>
        <end position="99"/>
    </location>
</feature>
<feature type="transmembrane region" description="Helical; Name=3" evidence="1">
    <location>
        <begin position="100"/>
        <end position="120"/>
    </location>
</feature>
<feature type="topological domain" description="Cytoplasmic" evidence="1">
    <location>
        <begin position="121"/>
        <end position="139"/>
    </location>
</feature>
<feature type="transmembrane region" description="Helical; Name=4" evidence="1">
    <location>
        <begin position="140"/>
        <end position="160"/>
    </location>
</feature>
<feature type="topological domain" description="Extracellular" evidence="1">
    <location>
        <begin position="161"/>
        <end position="197"/>
    </location>
</feature>
<feature type="transmembrane region" description="Helical; Name=5" evidence="1">
    <location>
        <begin position="198"/>
        <end position="217"/>
    </location>
</feature>
<feature type="topological domain" description="Cytoplasmic" evidence="1">
    <location>
        <begin position="218"/>
        <end position="237"/>
    </location>
</feature>
<feature type="transmembrane region" description="Helical; Name=6" evidence="1">
    <location>
        <begin position="238"/>
        <end position="258"/>
    </location>
</feature>
<feature type="topological domain" description="Extracellular" evidence="1">
    <location>
        <begin position="259"/>
        <end position="271"/>
    </location>
</feature>
<feature type="transmembrane region" description="Helical; Name=7" evidence="1">
    <location>
        <begin position="272"/>
        <end position="292"/>
    </location>
</feature>
<feature type="topological domain" description="Cytoplasmic" evidence="1">
    <location>
        <begin position="293"/>
        <end position="314"/>
    </location>
</feature>
<feature type="glycosylation site" description="N-linked (GlcNAc...) asparagine" evidence="1">
    <location>
        <position position="4"/>
    </location>
</feature>
<feature type="glycosylation site" description="N-linked (GlcNAc...) asparagine" evidence="1">
    <location>
        <position position="190"/>
    </location>
</feature>
<feature type="disulfide bond" evidence="2">
    <location>
        <begin position="97"/>
        <end position="189"/>
    </location>
</feature>
<sequence length="314" mass="35758">MLMNYSSATEFYLLGFPGSEELHHILFAIFFFFYLVTLMGNTVIIMIVCVDKRLQSPMYFFLGHLSALEILVTTIIVPVMLWGLLLPGMQTIYLSACVVQLFLYLAVGTTEFALLGAMAVDRYVAVCNPLRYNIIMNRHTCNFVVLVSWVFGFLFQIWPVYVMFQLTYCKSNVVNNFFCDRGQLLKLSCNNTLFTEFILFLMAVFVLFGSLIPTIVSNAYIISTILKIPSSSGRRKSFSTCASHFTCVVIGYGSCLFLYVKPKQTQAADYNWVVSLMVSVVTPFLNPFIFTLRNDKVIEALRDGVKRCCQLFRN</sequence>
<evidence type="ECO:0000255" key="1"/>
<evidence type="ECO:0000255" key="2">
    <source>
        <dbReference type="PROSITE-ProRule" id="PRU00521"/>
    </source>
</evidence>
<evidence type="ECO:0000305" key="3"/>
<protein>
    <recommendedName>
        <fullName>Olfactory receptor 9A4</fullName>
    </recommendedName>
    <alternativeName>
        <fullName>Olfactory receptor OR7-1</fullName>
    </alternativeName>
</protein>
<proteinExistence type="evidence at transcript level"/>
<comment type="function">
    <text evidence="3">Odorant receptor.</text>
</comment>
<comment type="subcellular location">
    <subcellularLocation>
        <location>Cell membrane</location>
        <topology>Multi-pass membrane protein</topology>
    </subcellularLocation>
</comment>
<comment type="similarity">
    <text evidence="2">Belongs to the G-protein coupled receptor 1 family.</text>
</comment>
<comment type="online information" name="Human Olfactory Receptor Data Exploratorium (HORDE)">
    <link uri="http://genome.weizmann.ac.il/horde/card/index/symbol:OR9A4"/>
</comment>
<name>OR9A4_HUMAN</name>
<reference key="1">
    <citation type="submission" date="2001-07" db="EMBL/GenBank/DDBJ databases">
        <title>Genome-wide discovery and analysis of human seven transmembrane helix receptor genes.</title>
        <authorList>
            <person name="Suwa M."/>
            <person name="Sato T."/>
            <person name="Okouchi I."/>
            <person name="Arita M."/>
            <person name="Futami K."/>
            <person name="Matsumoto S."/>
            <person name="Tsutsumi S."/>
            <person name="Aburatani H."/>
            <person name="Asai K."/>
            <person name="Akiyama Y."/>
        </authorList>
    </citation>
    <scope>NUCLEOTIDE SEQUENCE [GENOMIC DNA]</scope>
</reference>
<reference key="2">
    <citation type="journal article" date="2003" name="Science">
        <title>Human chromosome 7: DNA sequence and biology.</title>
        <authorList>
            <person name="Scherer S.W."/>
            <person name="Cheung J."/>
            <person name="MacDonald J.R."/>
            <person name="Osborne L.R."/>
            <person name="Nakabayashi K."/>
            <person name="Herbrick J.-A."/>
            <person name="Carson A.R."/>
            <person name="Parker-Katiraee L."/>
            <person name="Skaug J."/>
            <person name="Khaja R."/>
            <person name="Zhang J."/>
            <person name="Hudek A.K."/>
            <person name="Li M."/>
            <person name="Haddad M."/>
            <person name="Duggan G.E."/>
            <person name="Fernandez B.A."/>
            <person name="Kanematsu E."/>
            <person name="Gentles S."/>
            <person name="Christopoulos C.C."/>
            <person name="Choufani S."/>
            <person name="Kwasnicka D."/>
            <person name="Zheng X.H."/>
            <person name="Lai Z."/>
            <person name="Nusskern D.R."/>
            <person name="Zhang Q."/>
            <person name="Gu Z."/>
            <person name="Lu F."/>
            <person name="Zeesman S."/>
            <person name="Nowaczyk M.J."/>
            <person name="Teshima I."/>
            <person name="Chitayat D."/>
            <person name="Shuman C."/>
            <person name="Weksberg R."/>
            <person name="Zackai E.H."/>
            <person name="Grebe T.A."/>
            <person name="Cox S.R."/>
            <person name="Kirkpatrick S.J."/>
            <person name="Rahman N."/>
            <person name="Friedman J.M."/>
            <person name="Heng H.H.Q."/>
            <person name="Pelicci P.G."/>
            <person name="Lo-Coco F."/>
            <person name="Belloni E."/>
            <person name="Shaffer L.G."/>
            <person name="Pober B."/>
            <person name="Morton C.C."/>
            <person name="Gusella J.F."/>
            <person name="Bruns G.A.P."/>
            <person name="Korf B.R."/>
            <person name="Quade B.J."/>
            <person name="Ligon A.H."/>
            <person name="Ferguson H."/>
            <person name="Higgins A.W."/>
            <person name="Leach N.T."/>
            <person name="Herrick S.R."/>
            <person name="Lemyre E."/>
            <person name="Farra C.G."/>
            <person name="Kim H.-G."/>
            <person name="Summers A.M."/>
            <person name="Gripp K.W."/>
            <person name="Roberts W."/>
            <person name="Szatmari P."/>
            <person name="Winsor E.J.T."/>
            <person name="Grzeschik K.-H."/>
            <person name="Teebi A."/>
            <person name="Minassian B.A."/>
            <person name="Kere J."/>
            <person name="Armengol L."/>
            <person name="Pujana M.A."/>
            <person name="Estivill X."/>
            <person name="Wilson M.D."/>
            <person name="Koop B.F."/>
            <person name="Tosi S."/>
            <person name="Moore G.E."/>
            <person name="Boright A.P."/>
            <person name="Zlotorynski E."/>
            <person name="Kerem B."/>
            <person name="Kroisel P.M."/>
            <person name="Petek E."/>
            <person name="Oscier D.G."/>
            <person name="Mould S.J."/>
            <person name="Doehner H."/>
            <person name="Doehner K."/>
            <person name="Rommens J.M."/>
            <person name="Vincent J.B."/>
            <person name="Venter J.C."/>
            <person name="Li P.W."/>
            <person name="Mural R.J."/>
            <person name="Adams M.D."/>
            <person name="Tsui L.-C."/>
        </authorList>
    </citation>
    <scope>NUCLEOTIDE SEQUENCE [LARGE SCALE GENOMIC DNA]</scope>
</reference>
<reference key="3">
    <citation type="submission" date="2005-07" db="EMBL/GenBank/DDBJ databases">
        <authorList>
            <person name="Mural R.J."/>
            <person name="Istrail S."/>
            <person name="Sutton G.G."/>
            <person name="Florea L."/>
            <person name="Halpern A.L."/>
            <person name="Mobarry C.M."/>
            <person name="Lippert R."/>
            <person name="Walenz B."/>
            <person name="Shatkay H."/>
            <person name="Dew I."/>
            <person name="Miller J.R."/>
            <person name="Flanigan M.J."/>
            <person name="Edwards N.J."/>
            <person name="Bolanos R."/>
            <person name="Fasulo D."/>
            <person name="Halldorsson B.V."/>
            <person name="Hannenhalli S."/>
            <person name="Turner R."/>
            <person name="Yooseph S."/>
            <person name="Lu F."/>
            <person name="Nusskern D.R."/>
            <person name="Shue B.C."/>
            <person name="Zheng X.H."/>
            <person name="Zhong F."/>
            <person name="Delcher A.L."/>
            <person name="Huson D.H."/>
            <person name="Kravitz S.A."/>
            <person name="Mouchard L."/>
            <person name="Reinert K."/>
            <person name="Remington K.A."/>
            <person name="Clark A.G."/>
            <person name="Waterman M.S."/>
            <person name="Eichler E.E."/>
            <person name="Adams M.D."/>
            <person name="Hunkapiller M.W."/>
            <person name="Myers E.W."/>
            <person name="Venter J.C."/>
        </authorList>
    </citation>
    <scope>NUCLEOTIDE SEQUENCE [LARGE SCALE GENOMIC DNA]</scope>
</reference>
<reference key="4">
    <citation type="journal article" date="2004" name="Genome Res.">
        <title>The status, quality, and expansion of the NIH full-length cDNA project: the Mammalian Gene Collection (MGC).</title>
        <authorList>
            <consortium name="The MGC Project Team"/>
        </authorList>
    </citation>
    <scope>NUCLEOTIDE SEQUENCE [LARGE SCALE MRNA]</scope>
    <source>
        <tissue>Testis</tissue>
    </source>
</reference>
<reference key="5">
    <citation type="journal article" date="2004" name="Proc. Natl. Acad. Sci. U.S.A.">
        <title>The human olfactory receptor gene family.</title>
        <authorList>
            <person name="Malnic B."/>
            <person name="Godfrey P.A."/>
            <person name="Buck L.B."/>
        </authorList>
    </citation>
    <scope>IDENTIFICATION</scope>
</reference>
<reference key="6">
    <citation type="journal article" date="2004" name="Proc. Natl. Acad. Sci. U.S.A.">
        <authorList>
            <person name="Malnic B."/>
            <person name="Godfrey P.A."/>
            <person name="Buck L.B."/>
        </authorList>
    </citation>
    <scope>ERRATUM OF PUBMED:14983052</scope>
</reference>
<accession>Q8NGU2</accession>
<accession>B9EGV6</accession>
<accession>Q6IFI4</accession>
<gene>
    <name type="primary">OR9A4</name>
</gene>
<keyword id="KW-1003">Cell membrane</keyword>
<keyword id="KW-1015">Disulfide bond</keyword>
<keyword id="KW-0297">G-protein coupled receptor</keyword>
<keyword id="KW-0325">Glycoprotein</keyword>
<keyword id="KW-0472">Membrane</keyword>
<keyword id="KW-0552">Olfaction</keyword>
<keyword id="KW-0675">Receptor</keyword>
<keyword id="KW-1185">Reference proteome</keyword>
<keyword id="KW-0716">Sensory transduction</keyword>
<keyword id="KW-0807">Transducer</keyword>
<keyword id="KW-0812">Transmembrane</keyword>
<keyword id="KW-1133">Transmembrane helix</keyword>
<dbReference type="EMBL" id="AB065689">
    <property type="protein sequence ID" value="BAC05912.1"/>
    <property type="molecule type" value="Genomic_DNA"/>
</dbReference>
<dbReference type="EMBL" id="CH236950">
    <property type="protein sequence ID" value="EAL24013.1"/>
    <property type="molecule type" value="Genomic_DNA"/>
</dbReference>
<dbReference type="EMBL" id="CH471070">
    <property type="protein sequence ID" value="EAW83990.1"/>
    <property type="molecule type" value="Genomic_DNA"/>
</dbReference>
<dbReference type="EMBL" id="BC136819">
    <property type="protein sequence ID" value="AAI36820.1"/>
    <property type="molecule type" value="mRNA"/>
</dbReference>
<dbReference type="EMBL" id="BC136821">
    <property type="protein sequence ID" value="AAI36822.1"/>
    <property type="molecule type" value="mRNA"/>
</dbReference>
<dbReference type="EMBL" id="BK004278">
    <property type="protein sequence ID" value="DAA04676.1"/>
    <property type="molecule type" value="Genomic_DNA"/>
</dbReference>
<dbReference type="CCDS" id="CCDS43661.1"/>
<dbReference type="RefSeq" id="NP_001001656.1">
    <property type="nucleotide sequence ID" value="NM_001001656.3"/>
</dbReference>
<dbReference type="SMR" id="Q8NGU2"/>
<dbReference type="BioGRID" id="126222">
    <property type="interactions" value="1"/>
</dbReference>
<dbReference type="FunCoup" id="Q8NGU2">
    <property type="interactions" value="416"/>
</dbReference>
<dbReference type="STRING" id="9606.ENSP00000493151"/>
<dbReference type="GlyCosmos" id="Q8NGU2">
    <property type="glycosylation" value="2 sites, No reported glycans"/>
</dbReference>
<dbReference type="GlyGen" id="Q8NGU2">
    <property type="glycosylation" value="2 sites"/>
</dbReference>
<dbReference type="iPTMnet" id="Q8NGU2"/>
<dbReference type="PhosphoSitePlus" id="Q8NGU2"/>
<dbReference type="BioMuta" id="OR9A4"/>
<dbReference type="DMDM" id="38372772"/>
<dbReference type="jPOST" id="Q8NGU2"/>
<dbReference type="PaxDb" id="9606-ENSP00000448789"/>
<dbReference type="Antibodypedia" id="57873">
    <property type="antibodies" value="6 antibodies from 6 providers"/>
</dbReference>
<dbReference type="DNASU" id="130075"/>
<dbReference type="Ensembl" id="ENST00000548136.1">
    <property type="protein sequence ID" value="ENSP00000448789.1"/>
    <property type="gene ID" value="ENSG00000258083.2"/>
</dbReference>
<dbReference type="Ensembl" id="ENST00000641559.1">
    <property type="protein sequence ID" value="ENSP00000493151.1"/>
    <property type="gene ID" value="ENSG00000258083.2"/>
</dbReference>
<dbReference type="GeneID" id="130075"/>
<dbReference type="KEGG" id="hsa:130075"/>
<dbReference type="MANE-Select" id="ENST00000641559.1">
    <property type="protein sequence ID" value="ENSP00000493151.1"/>
    <property type="RefSeq nucleotide sequence ID" value="NM_001001656.3"/>
    <property type="RefSeq protein sequence ID" value="NP_001001656.1"/>
</dbReference>
<dbReference type="UCSC" id="uc003vwu.2">
    <property type="organism name" value="human"/>
</dbReference>
<dbReference type="AGR" id="HGNC:15095"/>
<dbReference type="CTD" id="130075"/>
<dbReference type="GeneCards" id="OR9A4"/>
<dbReference type="HGNC" id="HGNC:15095">
    <property type="gene designation" value="OR9A4"/>
</dbReference>
<dbReference type="HPA" id="ENSG00000258083">
    <property type="expression patterns" value="Not detected"/>
</dbReference>
<dbReference type="neXtProt" id="NX_Q8NGU2"/>
<dbReference type="OpenTargets" id="ENSG00000258083"/>
<dbReference type="PharmGKB" id="PA32787"/>
<dbReference type="VEuPathDB" id="HostDB:ENSG00000258083"/>
<dbReference type="eggNOG" id="ENOG502QVH7">
    <property type="taxonomic scope" value="Eukaryota"/>
</dbReference>
<dbReference type="GeneTree" id="ENSGT00940000163413"/>
<dbReference type="HOGENOM" id="CLU_012526_1_1_1"/>
<dbReference type="InParanoid" id="Q8NGU2"/>
<dbReference type="OMA" id="RTCNFVV"/>
<dbReference type="OrthoDB" id="6162029at2759"/>
<dbReference type="PAN-GO" id="Q8NGU2">
    <property type="GO annotations" value="0 GO annotations based on evolutionary models"/>
</dbReference>
<dbReference type="PhylomeDB" id="Q8NGU2"/>
<dbReference type="TreeFam" id="TF336833"/>
<dbReference type="PathwayCommons" id="Q8NGU2"/>
<dbReference type="Reactome" id="R-HSA-9752946">
    <property type="pathway name" value="Expression and translocation of olfactory receptors"/>
</dbReference>
<dbReference type="BioGRID-ORCS" id="130075">
    <property type="hits" value="8 hits in 734 CRISPR screens"/>
</dbReference>
<dbReference type="GeneWiki" id="OR9A4"/>
<dbReference type="GenomeRNAi" id="130075"/>
<dbReference type="Pharos" id="Q8NGU2">
    <property type="development level" value="Tdark"/>
</dbReference>
<dbReference type="PRO" id="PR:Q8NGU2"/>
<dbReference type="Proteomes" id="UP000005640">
    <property type="component" value="Chromosome 7"/>
</dbReference>
<dbReference type="RNAct" id="Q8NGU2">
    <property type="molecule type" value="protein"/>
</dbReference>
<dbReference type="Bgee" id="ENSG00000258083">
    <property type="expression patterns" value="Expressed in male germ line stem cell (sensu Vertebrata) in testis and 6 other cell types or tissues"/>
</dbReference>
<dbReference type="ExpressionAtlas" id="Q8NGU2">
    <property type="expression patterns" value="baseline and differential"/>
</dbReference>
<dbReference type="GO" id="GO:0005886">
    <property type="term" value="C:plasma membrane"/>
    <property type="evidence" value="ECO:0007669"/>
    <property type="project" value="UniProtKB-SubCell"/>
</dbReference>
<dbReference type="GO" id="GO:0004930">
    <property type="term" value="F:G protein-coupled receptor activity"/>
    <property type="evidence" value="ECO:0007669"/>
    <property type="project" value="UniProtKB-KW"/>
</dbReference>
<dbReference type="GO" id="GO:0004984">
    <property type="term" value="F:olfactory receptor activity"/>
    <property type="evidence" value="ECO:0007669"/>
    <property type="project" value="InterPro"/>
</dbReference>
<dbReference type="CDD" id="cd15912">
    <property type="entry name" value="7tmA_OR6C-like"/>
    <property type="match status" value="1"/>
</dbReference>
<dbReference type="FunFam" id="1.20.1070.10:FF:000015">
    <property type="entry name" value="Olfactory receptor"/>
    <property type="match status" value="1"/>
</dbReference>
<dbReference type="Gene3D" id="1.20.1070.10">
    <property type="entry name" value="Rhodopsin 7-helix transmembrane proteins"/>
    <property type="match status" value="1"/>
</dbReference>
<dbReference type="InterPro" id="IPR000276">
    <property type="entry name" value="GPCR_Rhodpsn"/>
</dbReference>
<dbReference type="InterPro" id="IPR017452">
    <property type="entry name" value="GPCR_Rhodpsn_7TM"/>
</dbReference>
<dbReference type="InterPro" id="IPR000725">
    <property type="entry name" value="Olfact_rcpt"/>
</dbReference>
<dbReference type="InterPro" id="IPR047132">
    <property type="entry name" value="Olfact_rcpt_6C-like"/>
</dbReference>
<dbReference type="PANTHER" id="PTHR26454">
    <property type="entry name" value="OLFACTORY RECEPTOR"/>
    <property type="match status" value="1"/>
</dbReference>
<dbReference type="PANTHER" id="PTHR26454:SF18">
    <property type="entry name" value="OLFACTORY RECEPTOR 6C76"/>
    <property type="match status" value="1"/>
</dbReference>
<dbReference type="Pfam" id="PF13853">
    <property type="entry name" value="7tm_4"/>
    <property type="match status" value="1"/>
</dbReference>
<dbReference type="PRINTS" id="PR00237">
    <property type="entry name" value="GPCRRHODOPSN"/>
</dbReference>
<dbReference type="PRINTS" id="PR00245">
    <property type="entry name" value="OLFACTORYR"/>
</dbReference>
<dbReference type="SUPFAM" id="SSF81321">
    <property type="entry name" value="Family A G protein-coupled receptor-like"/>
    <property type="match status" value="1"/>
</dbReference>
<dbReference type="PROSITE" id="PS00237">
    <property type="entry name" value="G_PROTEIN_RECEP_F1_1"/>
    <property type="match status" value="1"/>
</dbReference>
<dbReference type="PROSITE" id="PS50262">
    <property type="entry name" value="G_PROTEIN_RECEP_F1_2"/>
    <property type="match status" value="1"/>
</dbReference>
<organism>
    <name type="scientific">Homo sapiens</name>
    <name type="common">Human</name>
    <dbReference type="NCBI Taxonomy" id="9606"/>
    <lineage>
        <taxon>Eukaryota</taxon>
        <taxon>Metazoa</taxon>
        <taxon>Chordata</taxon>
        <taxon>Craniata</taxon>
        <taxon>Vertebrata</taxon>
        <taxon>Euteleostomi</taxon>
        <taxon>Mammalia</taxon>
        <taxon>Eutheria</taxon>
        <taxon>Euarchontoglires</taxon>
        <taxon>Primates</taxon>
        <taxon>Haplorrhini</taxon>
        <taxon>Catarrhini</taxon>
        <taxon>Hominidae</taxon>
        <taxon>Homo</taxon>
    </lineage>
</organism>